<dbReference type="EMBL" id="AE016828">
    <property type="protein sequence ID" value="AAO89571.1"/>
    <property type="molecule type" value="Genomic_DNA"/>
</dbReference>
<dbReference type="RefSeq" id="NP_819057.1">
    <property type="nucleotide sequence ID" value="NC_002971.4"/>
</dbReference>
<dbReference type="RefSeq" id="WP_005769932.1">
    <property type="nucleotide sequence ID" value="NZ_CDBG01000001.1"/>
</dbReference>
<dbReference type="SMR" id="Q83FD8"/>
<dbReference type="STRING" id="227377.CBU_0001"/>
<dbReference type="EnsemblBacteria" id="AAO89571">
    <property type="protein sequence ID" value="AAO89571"/>
    <property type="gene ID" value="CBU_0001"/>
</dbReference>
<dbReference type="GeneID" id="1207921"/>
<dbReference type="KEGG" id="cbu:CBU_0001"/>
<dbReference type="PATRIC" id="fig|227377.7.peg.2"/>
<dbReference type="eggNOG" id="COG0593">
    <property type="taxonomic scope" value="Bacteria"/>
</dbReference>
<dbReference type="HOGENOM" id="CLU_026910_0_1_6"/>
<dbReference type="OrthoDB" id="9807019at2"/>
<dbReference type="Proteomes" id="UP000002671">
    <property type="component" value="Chromosome"/>
</dbReference>
<dbReference type="GO" id="GO:0005737">
    <property type="term" value="C:cytoplasm"/>
    <property type="evidence" value="ECO:0007669"/>
    <property type="project" value="UniProtKB-SubCell"/>
</dbReference>
<dbReference type="GO" id="GO:0005886">
    <property type="term" value="C:plasma membrane"/>
    <property type="evidence" value="ECO:0000318"/>
    <property type="project" value="GO_Central"/>
</dbReference>
<dbReference type="GO" id="GO:0005524">
    <property type="term" value="F:ATP binding"/>
    <property type="evidence" value="ECO:0007669"/>
    <property type="project" value="UniProtKB-UniRule"/>
</dbReference>
<dbReference type="GO" id="GO:0016887">
    <property type="term" value="F:ATP hydrolysis activity"/>
    <property type="evidence" value="ECO:0007669"/>
    <property type="project" value="InterPro"/>
</dbReference>
<dbReference type="GO" id="GO:0003688">
    <property type="term" value="F:DNA replication origin binding"/>
    <property type="evidence" value="ECO:0000318"/>
    <property type="project" value="GO_Central"/>
</dbReference>
<dbReference type="GO" id="GO:0008289">
    <property type="term" value="F:lipid binding"/>
    <property type="evidence" value="ECO:0007669"/>
    <property type="project" value="UniProtKB-KW"/>
</dbReference>
<dbReference type="GO" id="GO:0006260">
    <property type="term" value="P:DNA replication"/>
    <property type="evidence" value="ECO:0000318"/>
    <property type="project" value="GO_Central"/>
</dbReference>
<dbReference type="GO" id="GO:0006270">
    <property type="term" value="P:DNA replication initiation"/>
    <property type="evidence" value="ECO:0000318"/>
    <property type="project" value="GO_Central"/>
</dbReference>
<dbReference type="GO" id="GO:0006275">
    <property type="term" value="P:regulation of DNA replication"/>
    <property type="evidence" value="ECO:0007669"/>
    <property type="project" value="UniProtKB-UniRule"/>
</dbReference>
<dbReference type="CDD" id="cd00009">
    <property type="entry name" value="AAA"/>
    <property type="match status" value="1"/>
</dbReference>
<dbReference type="CDD" id="cd06571">
    <property type="entry name" value="Bac_DnaA_C"/>
    <property type="match status" value="1"/>
</dbReference>
<dbReference type="FunFam" id="1.10.1750.10:FF:000001">
    <property type="entry name" value="Chromosomal replication initiator protein DnaA"/>
    <property type="match status" value="1"/>
</dbReference>
<dbReference type="FunFam" id="1.10.8.60:FF:000003">
    <property type="entry name" value="Chromosomal replication initiator protein DnaA"/>
    <property type="match status" value="1"/>
</dbReference>
<dbReference type="FunFam" id="3.40.50.300:FF:000103">
    <property type="entry name" value="Chromosomal replication initiator protein DnaA"/>
    <property type="match status" value="1"/>
</dbReference>
<dbReference type="Gene3D" id="1.10.1750.10">
    <property type="match status" value="1"/>
</dbReference>
<dbReference type="Gene3D" id="1.10.8.60">
    <property type="match status" value="1"/>
</dbReference>
<dbReference type="Gene3D" id="3.30.300.180">
    <property type="match status" value="1"/>
</dbReference>
<dbReference type="Gene3D" id="3.40.50.300">
    <property type="entry name" value="P-loop containing nucleotide triphosphate hydrolases"/>
    <property type="match status" value="1"/>
</dbReference>
<dbReference type="HAMAP" id="MF_00377">
    <property type="entry name" value="DnaA_bact"/>
    <property type="match status" value="1"/>
</dbReference>
<dbReference type="InterPro" id="IPR003593">
    <property type="entry name" value="AAA+_ATPase"/>
</dbReference>
<dbReference type="InterPro" id="IPR001957">
    <property type="entry name" value="Chromosome_initiator_DnaA"/>
</dbReference>
<dbReference type="InterPro" id="IPR020591">
    <property type="entry name" value="Chromosome_initiator_DnaA-like"/>
</dbReference>
<dbReference type="InterPro" id="IPR018312">
    <property type="entry name" value="Chromosome_initiator_DnaA_CS"/>
</dbReference>
<dbReference type="InterPro" id="IPR013159">
    <property type="entry name" value="DnaA_C"/>
</dbReference>
<dbReference type="InterPro" id="IPR013317">
    <property type="entry name" value="DnaA_dom"/>
</dbReference>
<dbReference type="InterPro" id="IPR024633">
    <property type="entry name" value="DnaA_N_dom"/>
</dbReference>
<dbReference type="InterPro" id="IPR038454">
    <property type="entry name" value="DnaA_N_sf"/>
</dbReference>
<dbReference type="InterPro" id="IPR027417">
    <property type="entry name" value="P-loop_NTPase"/>
</dbReference>
<dbReference type="InterPro" id="IPR010921">
    <property type="entry name" value="Trp_repressor/repl_initiator"/>
</dbReference>
<dbReference type="NCBIfam" id="TIGR00362">
    <property type="entry name" value="DnaA"/>
    <property type="match status" value="1"/>
</dbReference>
<dbReference type="PANTHER" id="PTHR30050">
    <property type="entry name" value="CHROMOSOMAL REPLICATION INITIATOR PROTEIN DNAA"/>
    <property type="match status" value="1"/>
</dbReference>
<dbReference type="PANTHER" id="PTHR30050:SF2">
    <property type="entry name" value="CHROMOSOMAL REPLICATION INITIATOR PROTEIN DNAA"/>
    <property type="match status" value="1"/>
</dbReference>
<dbReference type="Pfam" id="PF00308">
    <property type="entry name" value="Bac_DnaA"/>
    <property type="match status" value="1"/>
</dbReference>
<dbReference type="Pfam" id="PF08299">
    <property type="entry name" value="Bac_DnaA_C"/>
    <property type="match status" value="1"/>
</dbReference>
<dbReference type="Pfam" id="PF11638">
    <property type="entry name" value="DnaA_N"/>
    <property type="match status" value="1"/>
</dbReference>
<dbReference type="PRINTS" id="PR00051">
    <property type="entry name" value="DNAA"/>
</dbReference>
<dbReference type="SMART" id="SM00382">
    <property type="entry name" value="AAA"/>
    <property type="match status" value="1"/>
</dbReference>
<dbReference type="SMART" id="SM00760">
    <property type="entry name" value="Bac_DnaA_C"/>
    <property type="match status" value="1"/>
</dbReference>
<dbReference type="SUPFAM" id="SSF52540">
    <property type="entry name" value="P-loop containing nucleoside triphosphate hydrolases"/>
    <property type="match status" value="1"/>
</dbReference>
<dbReference type="SUPFAM" id="SSF48295">
    <property type="entry name" value="TrpR-like"/>
    <property type="match status" value="1"/>
</dbReference>
<dbReference type="PROSITE" id="PS01008">
    <property type="entry name" value="DNAA"/>
    <property type="match status" value="1"/>
</dbReference>
<name>DNAA_COXBU</name>
<accession>Q83FD8</accession>
<sequence>MSLPTSLWDKCLGYLRDEIPPQQYNTWIRPLHAIESKQNGLLLLAPNRFVLDWINERFLNRITELLDELSDTPPQIRLQIGSRSTEMPTKNSHEPSHRKAAAPPAGTTISHTQANINSNFTFDSFVEGKSNQLARAAATQVAENPGQAYNPLFIYGGVGLGKTHLMHAVGNAILRKDSSKKVLYLHSERFVADMIKALQHNAMNEFKRFYRSLNALLIDDIQFFAGKDRSQEEFFHTFNALLDGQQQIILTCDRYPKEINGLEERLQSRFGWGLTVAIEPPELETRVAILMSKAEQLKVHLPHEVAFFIAKHIQSNVRELEGALKRVIANAHFTGQSITVDFTREALKDLLTLQARLITIENIQKTVAEYYKIKVADLLAKRRNRSVARPRQMAMALAKELTNHSLPEIGDAFGGRDHTTVLHACRKVKELLATSLDILEDYKNLMRILSG</sequence>
<proteinExistence type="inferred from homology"/>
<protein>
    <recommendedName>
        <fullName evidence="1">Chromosomal replication initiator protein DnaA</fullName>
    </recommendedName>
</protein>
<feature type="chain" id="PRO_0000114170" description="Chromosomal replication initiator protein DnaA">
    <location>
        <begin position="1"/>
        <end position="451"/>
    </location>
</feature>
<feature type="region of interest" description="Domain I, interacts with DnaA modulators" evidence="1">
    <location>
        <begin position="1"/>
        <end position="72"/>
    </location>
</feature>
<feature type="region of interest" description="Domain II" evidence="1">
    <location>
        <begin position="72"/>
        <end position="114"/>
    </location>
</feature>
<feature type="region of interest" description="Disordered" evidence="2">
    <location>
        <begin position="81"/>
        <end position="106"/>
    </location>
</feature>
<feature type="region of interest" description="Domain III, AAA+ region" evidence="1">
    <location>
        <begin position="115"/>
        <end position="331"/>
    </location>
</feature>
<feature type="region of interest" description="Domain IV, binds dsDNA" evidence="1">
    <location>
        <begin position="332"/>
        <end position="451"/>
    </location>
</feature>
<feature type="compositionally biased region" description="Polar residues" evidence="2">
    <location>
        <begin position="81"/>
        <end position="90"/>
    </location>
</feature>
<feature type="binding site" evidence="1">
    <location>
        <position position="159"/>
    </location>
    <ligand>
        <name>ATP</name>
        <dbReference type="ChEBI" id="CHEBI:30616"/>
    </ligand>
</feature>
<feature type="binding site" evidence="1">
    <location>
        <position position="161"/>
    </location>
    <ligand>
        <name>ATP</name>
        <dbReference type="ChEBI" id="CHEBI:30616"/>
    </ligand>
</feature>
<feature type="binding site" evidence="1">
    <location>
        <position position="162"/>
    </location>
    <ligand>
        <name>ATP</name>
        <dbReference type="ChEBI" id="CHEBI:30616"/>
    </ligand>
</feature>
<feature type="binding site" evidence="1">
    <location>
        <position position="163"/>
    </location>
    <ligand>
        <name>ATP</name>
        <dbReference type="ChEBI" id="CHEBI:30616"/>
    </ligand>
</feature>
<organism>
    <name type="scientific">Coxiella burnetii (strain RSA 493 / Nine Mile phase I)</name>
    <dbReference type="NCBI Taxonomy" id="227377"/>
    <lineage>
        <taxon>Bacteria</taxon>
        <taxon>Pseudomonadati</taxon>
        <taxon>Pseudomonadota</taxon>
        <taxon>Gammaproteobacteria</taxon>
        <taxon>Legionellales</taxon>
        <taxon>Coxiellaceae</taxon>
        <taxon>Coxiella</taxon>
    </lineage>
</organism>
<gene>
    <name evidence="1" type="primary">dnaA</name>
    <name type="ordered locus">CBU_0001</name>
</gene>
<reference key="1">
    <citation type="journal article" date="2003" name="Proc. Natl. Acad. Sci. U.S.A.">
        <title>Complete genome sequence of the Q-fever pathogen, Coxiella burnetii.</title>
        <authorList>
            <person name="Seshadri R."/>
            <person name="Paulsen I.T."/>
            <person name="Eisen J.A."/>
            <person name="Read T.D."/>
            <person name="Nelson K.E."/>
            <person name="Nelson W.C."/>
            <person name="Ward N.L."/>
            <person name="Tettelin H."/>
            <person name="Davidsen T.M."/>
            <person name="Beanan M.J."/>
            <person name="DeBoy R.T."/>
            <person name="Daugherty S.C."/>
            <person name="Brinkac L.M."/>
            <person name="Madupu R."/>
            <person name="Dodson R.J."/>
            <person name="Khouri H.M."/>
            <person name="Lee K.H."/>
            <person name="Carty H.A."/>
            <person name="Scanlan D."/>
            <person name="Heinzen R.A."/>
            <person name="Thompson H.A."/>
            <person name="Samuel J.E."/>
            <person name="Fraser C.M."/>
            <person name="Heidelberg J.F."/>
        </authorList>
    </citation>
    <scope>NUCLEOTIDE SEQUENCE [LARGE SCALE GENOMIC DNA]</scope>
    <source>
        <strain>RSA 493 / Nine Mile phase I</strain>
    </source>
</reference>
<comment type="function">
    <text evidence="1">Plays an essential role in the initiation and regulation of chromosomal replication. ATP-DnaA binds to the origin of replication (oriC) to initiate formation of the DNA replication initiation complex once per cell cycle. Binds the DnaA box (a 9 base pair repeat at the origin) and separates the double-stranded (ds)DNA. Forms a right-handed helical filament on oriC DNA; dsDNA binds to the exterior of the filament while single-stranded (ss)DNA is stabiized in the filament's interior. The ATP-DnaA-oriC complex binds and stabilizes one strand of the AT-rich DNA unwinding element (DUE), permitting loading of DNA polymerase. After initiation quickly degrades to an ADP-DnaA complex that is not apt for DNA replication. Binds acidic phospholipids.</text>
</comment>
<comment type="subunit">
    <text evidence="1">Oligomerizes as a right-handed, spiral filament on DNA at oriC.</text>
</comment>
<comment type="subcellular location">
    <subcellularLocation>
        <location evidence="1">Cytoplasm</location>
    </subcellularLocation>
</comment>
<comment type="domain">
    <text evidence="1">Domain I is involved in oligomerization and binding regulators, domain II is flexibile and of varying length in different bacteria, domain III forms the AAA+ region, while domain IV binds dsDNA.</text>
</comment>
<comment type="similarity">
    <text evidence="1">Belongs to the DnaA family.</text>
</comment>
<keyword id="KW-0067">ATP-binding</keyword>
<keyword id="KW-0963">Cytoplasm</keyword>
<keyword id="KW-0235">DNA replication</keyword>
<keyword id="KW-0238">DNA-binding</keyword>
<keyword id="KW-0446">Lipid-binding</keyword>
<keyword id="KW-0547">Nucleotide-binding</keyword>
<keyword id="KW-1185">Reference proteome</keyword>
<evidence type="ECO:0000255" key="1">
    <source>
        <dbReference type="HAMAP-Rule" id="MF_00377"/>
    </source>
</evidence>
<evidence type="ECO:0000256" key="2">
    <source>
        <dbReference type="SAM" id="MobiDB-lite"/>
    </source>
</evidence>